<protein>
    <recommendedName>
        <fullName>Putative F-box protein At1g67623</fullName>
    </recommendedName>
</protein>
<gene>
    <name type="ordered locus">At1g67623</name>
    <name type="ORF">F12A21.25</name>
</gene>
<feature type="chain" id="PRO_0000283352" description="Putative F-box protein At1g67623">
    <location>
        <begin position="1"/>
        <end position="296"/>
    </location>
</feature>
<feature type="domain" description="F-box" evidence="1">
    <location>
        <begin position="21"/>
        <end position="70"/>
    </location>
</feature>
<organism>
    <name type="scientific">Arabidopsis thaliana</name>
    <name type="common">Mouse-ear cress</name>
    <dbReference type="NCBI Taxonomy" id="3702"/>
    <lineage>
        <taxon>Eukaryota</taxon>
        <taxon>Viridiplantae</taxon>
        <taxon>Streptophyta</taxon>
        <taxon>Embryophyta</taxon>
        <taxon>Tracheophyta</taxon>
        <taxon>Spermatophyta</taxon>
        <taxon>Magnoliopsida</taxon>
        <taxon>eudicotyledons</taxon>
        <taxon>Gunneridae</taxon>
        <taxon>Pentapetalae</taxon>
        <taxon>rosids</taxon>
        <taxon>malvids</taxon>
        <taxon>Brassicales</taxon>
        <taxon>Brassicaceae</taxon>
        <taxon>Camelineae</taxon>
        <taxon>Arabidopsis</taxon>
    </lineage>
</organism>
<proteinExistence type="predicted"/>
<accession>Q9FXC7</accession>
<evidence type="ECO:0000255" key="1">
    <source>
        <dbReference type="PROSITE-ProRule" id="PRU00080"/>
    </source>
</evidence>
<reference key="1">
    <citation type="journal article" date="2000" name="Nature">
        <title>Sequence and analysis of chromosome 1 of the plant Arabidopsis thaliana.</title>
        <authorList>
            <person name="Theologis A."/>
            <person name="Ecker J.R."/>
            <person name="Palm C.J."/>
            <person name="Federspiel N.A."/>
            <person name="Kaul S."/>
            <person name="White O."/>
            <person name="Alonso J."/>
            <person name="Altafi H."/>
            <person name="Araujo R."/>
            <person name="Bowman C.L."/>
            <person name="Brooks S.Y."/>
            <person name="Buehler E."/>
            <person name="Chan A."/>
            <person name="Chao Q."/>
            <person name="Chen H."/>
            <person name="Cheuk R.F."/>
            <person name="Chin C.W."/>
            <person name="Chung M.K."/>
            <person name="Conn L."/>
            <person name="Conway A.B."/>
            <person name="Conway A.R."/>
            <person name="Creasy T.H."/>
            <person name="Dewar K."/>
            <person name="Dunn P."/>
            <person name="Etgu P."/>
            <person name="Feldblyum T.V."/>
            <person name="Feng J.-D."/>
            <person name="Fong B."/>
            <person name="Fujii C.Y."/>
            <person name="Gill J.E."/>
            <person name="Goldsmith A.D."/>
            <person name="Haas B."/>
            <person name="Hansen N.F."/>
            <person name="Hughes B."/>
            <person name="Huizar L."/>
            <person name="Hunter J.L."/>
            <person name="Jenkins J."/>
            <person name="Johnson-Hopson C."/>
            <person name="Khan S."/>
            <person name="Khaykin E."/>
            <person name="Kim C.J."/>
            <person name="Koo H.L."/>
            <person name="Kremenetskaia I."/>
            <person name="Kurtz D.B."/>
            <person name="Kwan A."/>
            <person name="Lam B."/>
            <person name="Langin-Hooper S."/>
            <person name="Lee A."/>
            <person name="Lee J.M."/>
            <person name="Lenz C.A."/>
            <person name="Li J.H."/>
            <person name="Li Y.-P."/>
            <person name="Lin X."/>
            <person name="Liu S.X."/>
            <person name="Liu Z.A."/>
            <person name="Luros J.S."/>
            <person name="Maiti R."/>
            <person name="Marziali A."/>
            <person name="Militscher J."/>
            <person name="Miranda M."/>
            <person name="Nguyen M."/>
            <person name="Nierman W.C."/>
            <person name="Osborne B.I."/>
            <person name="Pai G."/>
            <person name="Peterson J."/>
            <person name="Pham P.K."/>
            <person name="Rizzo M."/>
            <person name="Rooney T."/>
            <person name="Rowley D."/>
            <person name="Sakano H."/>
            <person name="Salzberg S.L."/>
            <person name="Schwartz J.R."/>
            <person name="Shinn P."/>
            <person name="Southwick A.M."/>
            <person name="Sun H."/>
            <person name="Tallon L.J."/>
            <person name="Tambunga G."/>
            <person name="Toriumi M.J."/>
            <person name="Town C.D."/>
            <person name="Utterback T."/>
            <person name="Van Aken S."/>
            <person name="Vaysberg M."/>
            <person name="Vysotskaia V.S."/>
            <person name="Walker M."/>
            <person name="Wu D."/>
            <person name="Yu G."/>
            <person name="Fraser C.M."/>
            <person name="Venter J.C."/>
            <person name="Davis R.W."/>
        </authorList>
    </citation>
    <scope>NUCLEOTIDE SEQUENCE [LARGE SCALE GENOMIC DNA]</scope>
    <source>
        <strain>cv. Columbia</strain>
    </source>
</reference>
<reference key="2">
    <citation type="journal article" date="2017" name="Plant J.">
        <title>Araport11: a complete reannotation of the Arabidopsis thaliana reference genome.</title>
        <authorList>
            <person name="Cheng C.Y."/>
            <person name="Krishnakumar V."/>
            <person name="Chan A.P."/>
            <person name="Thibaud-Nissen F."/>
            <person name="Schobel S."/>
            <person name="Town C.D."/>
        </authorList>
    </citation>
    <scope>GENOME REANNOTATION</scope>
    <source>
        <strain>cv. Columbia</strain>
    </source>
</reference>
<dbReference type="EMBL" id="AC008113">
    <property type="protein sequence ID" value="AAG28900.1"/>
    <property type="molecule type" value="Genomic_DNA"/>
</dbReference>
<dbReference type="EMBL" id="CP002684">
    <property type="protein sequence ID" value="AEE34672.1"/>
    <property type="molecule type" value="Genomic_DNA"/>
</dbReference>
<dbReference type="PIR" id="F96699">
    <property type="entry name" value="F96699"/>
</dbReference>
<dbReference type="RefSeq" id="NP_176929.1">
    <property type="nucleotide sequence ID" value="NM_105429.2"/>
</dbReference>
<dbReference type="SMR" id="Q9FXC7"/>
<dbReference type="FunCoup" id="Q9FXC7">
    <property type="interactions" value="153"/>
</dbReference>
<dbReference type="STRING" id="3702.Q9FXC7"/>
<dbReference type="iPTMnet" id="Q9FXC7"/>
<dbReference type="PaxDb" id="3702-AT1G67623.1"/>
<dbReference type="EnsemblPlants" id="AT1G67623.1">
    <property type="protein sequence ID" value="AT1G67623.1"/>
    <property type="gene ID" value="AT1G67623"/>
</dbReference>
<dbReference type="GeneID" id="843084"/>
<dbReference type="Gramene" id="AT1G67623.1">
    <property type="protein sequence ID" value="AT1G67623.1"/>
    <property type="gene ID" value="AT1G67623"/>
</dbReference>
<dbReference type="KEGG" id="ath:AT1G67623"/>
<dbReference type="Araport" id="AT1G67623"/>
<dbReference type="TAIR" id="AT1G67623"/>
<dbReference type="eggNOG" id="KOG0851">
    <property type="taxonomic scope" value="Eukaryota"/>
</dbReference>
<dbReference type="HOGENOM" id="CLU_075437_0_0_1"/>
<dbReference type="InParanoid" id="Q9FXC7"/>
<dbReference type="OMA" id="VREKCEC"/>
<dbReference type="PhylomeDB" id="Q9FXC7"/>
<dbReference type="PRO" id="PR:Q9FXC7"/>
<dbReference type="Proteomes" id="UP000006548">
    <property type="component" value="Chromosome 1"/>
</dbReference>
<dbReference type="ExpressionAtlas" id="Q9FXC7">
    <property type="expression patterns" value="baseline and differential"/>
</dbReference>
<dbReference type="CDD" id="cd09917">
    <property type="entry name" value="F-box_SF"/>
    <property type="match status" value="1"/>
</dbReference>
<dbReference type="Gene3D" id="1.20.1280.50">
    <property type="match status" value="1"/>
</dbReference>
<dbReference type="InterPro" id="IPR040338">
    <property type="entry name" value="At1g67623-like"/>
</dbReference>
<dbReference type="InterPro" id="IPR057136">
    <property type="entry name" value="At2g35280_TPR_dom"/>
</dbReference>
<dbReference type="InterPro" id="IPR036047">
    <property type="entry name" value="F-box-like_dom_sf"/>
</dbReference>
<dbReference type="InterPro" id="IPR001810">
    <property type="entry name" value="F-box_dom"/>
</dbReference>
<dbReference type="PANTHER" id="PTHR33784:SF10">
    <property type="entry name" value="F-BOX PROTEIN"/>
    <property type="match status" value="1"/>
</dbReference>
<dbReference type="PANTHER" id="PTHR33784">
    <property type="entry name" value="OS05G0482100 PROTEIN"/>
    <property type="match status" value="1"/>
</dbReference>
<dbReference type="Pfam" id="PF00646">
    <property type="entry name" value="F-box"/>
    <property type="match status" value="1"/>
</dbReference>
<dbReference type="Pfam" id="PF23310">
    <property type="entry name" value="TPR_27"/>
    <property type="match status" value="1"/>
</dbReference>
<dbReference type="SUPFAM" id="SSF81383">
    <property type="entry name" value="F-box domain"/>
    <property type="match status" value="1"/>
</dbReference>
<dbReference type="PROSITE" id="PS50181">
    <property type="entry name" value="FBOX"/>
    <property type="match status" value="1"/>
</dbReference>
<keyword id="KW-1185">Reference proteome</keyword>
<name>FB79_ARATH</name>
<sequence length="296" mass="34438">MVVSLSLHASSSIRKSKTKASLCLDSLPEDLLVEISSCTGASSLSAVRNLRLVSKSFRRICDEKYVFYRLSLKEIEFLPWHENSAKFIERCTESRNPEALFQKGFINYFRDKLQDRGLEYLAEAAEKGIKEAKYVYGVILICLGGKTKQKGFEILSSVIKQLMSTTMNELVEFRYKIQKIRYGFWWSDNTVVEQLKTAYVSEKCKCDCKTRMLLLVMNRGWYLFGDETDLDFSSACELYLYINRNFPFEAKKSKIDGEIYWACEFEPNRFVRTEPNRGLDKSVRLRLIEYNRSVSV</sequence>